<proteinExistence type="inferred from homology"/>
<accession>A0T0D9</accession>
<organism>
    <name type="scientific">Phaeodactylum tricornutum (strain CCAP 1055/1)</name>
    <dbReference type="NCBI Taxonomy" id="556484"/>
    <lineage>
        <taxon>Eukaryota</taxon>
        <taxon>Sar</taxon>
        <taxon>Stramenopiles</taxon>
        <taxon>Ochrophyta</taxon>
        <taxon>Bacillariophyta</taxon>
        <taxon>Bacillariophyceae</taxon>
        <taxon>Bacillariophycidae</taxon>
        <taxon>Naviculales</taxon>
        <taxon>Phaeodactylaceae</taxon>
        <taxon>Phaeodactylum</taxon>
    </lineage>
</organism>
<feature type="chain" id="PRO_0000277197" description="DNA-directed RNA polymerase subunit beta''">
    <location>
        <begin position="1"/>
        <end position="1415"/>
    </location>
</feature>
<feature type="binding site" evidence="1">
    <location>
        <position position="217"/>
    </location>
    <ligand>
        <name>Zn(2+)</name>
        <dbReference type="ChEBI" id="CHEBI:29105"/>
    </ligand>
</feature>
<feature type="binding site" evidence="1">
    <location>
        <position position="291"/>
    </location>
    <ligand>
        <name>Zn(2+)</name>
        <dbReference type="ChEBI" id="CHEBI:29105"/>
    </ligand>
</feature>
<feature type="binding site" evidence="1">
    <location>
        <position position="298"/>
    </location>
    <ligand>
        <name>Zn(2+)</name>
        <dbReference type="ChEBI" id="CHEBI:29105"/>
    </ligand>
</feature>
<feature type="binding site" evidence="1">
    <location>
        <position position="301"/>
    </location>
    <ligand>
        <name>Zn(2+)</name>
        <dbReference type="ChEBI" id="CHEBI:29105"/>
    </ligand>
</feature>
<sequence>MKNYKYQNTLIGKKQLRQLLAWSFTNYDSMQACALADELKYLGFKYASQAGISISIEDLKIPFVKNLMLEKANQEIINAEKIYLKGKITDVERFQKIIDTWSLTSESLKEQVIYYFKNYDPLNSVYIMAFSGARGNLSQVRQLVGMRGLMSDPSGEIMNLPIKKNFREGLTITDYLMSGYGARKGIVDTALKTANSGYLTRRLIDVGQDVLIREKDCLTNHSFLFSVSNEELKSLNLIYQKILGRVLSKPIHDPKTNRILVPAGTQITPKLIEKFKEYNVKKFYIRSPLTCNLYRAICQNCYGWDLANENLVDIGEAIGILAGQSIGEPGTQLTMRTFHTGGIFTSEARQQITTPINGVIRFYKTLKTVLLRTNRGEDVLITKNSGSVILIPDDEDQDLVQIEILRNTILFPKNNQYIVKDTVIGELLNTNRQIKTEVKPILSDTCGEIFMPVLKKKINLLNNNKLLWILSGQLYNGPINSFVNFYSDYKLNCRSYIFRTKIINHYSGSVEFINTKSNLYQRLIRIKNNKYAFFNSKLEKLRYSIQHKNYLLNLQGDKYLVKIQKKDLRLYLQATRNYQVATLITNRFKTLVGGTVYYDHQNVYKNYKPNSTINYLSRVNFLNNYKPVVSHKTIIWLGEEVYKVNCELNILLAEHGDFISEGFELIPGLFSKTSGVVVIKQKNNLIHTISIKSGLVYEGKKFKMTSKKVYYPGEIIFSHIPITKISFCEHITGKNIEQLLVRPIEIYEFPYLNNISAKIQNTHNKDSNIRLSSKIIYSYKPNQLIKGTRNLNLISTILTLKSKETVTKNLNLELSHNQKTKLIDLKISEKFNLNHYISPNLRYKNLQSCLLIQPNQFIDRYTNLGYLESKTSNSLEIVKIKLKIKDSKQILLISNQDCLTVKKEKFIGKKLNDFIINSSNVNETGKIIIENENNLTLQKGKPYFFPNCKDDNVINKTNLQYKTISPTRVSPRLEKNINYKISLNYYDMMKLSVNKDCTLSEKNEDPIKIKSEFSKLFLKKNGKLYSSLIPQFFKKFSLHTSEFSPKYKQIIQPNGLAKRTIGKMDRTLLMQSSEITKNDYKNLKNSNYQLALLKFVEYPFTKSTKSIGLYSITEDYFEQDVNSVFCKNSEFIEEGETLGLLNLEKEITGDIVQGLPRIEEILEARKKNSNIKRIPTSQKKGLLVQKSSLDTNFEFRKLGTNIKENEKVNPHKLLKVYFNYYGWIKPFICDQKEEIKYARLIKNYEGSYKSFKKVQSFILDSVQAVYQSQGVIINDKHLEVIIKQMTTKVLITYEGNTPLLRREVIDLYHIQYINQIIQSQGKQSACYVPLLLGITKAALNNPSFISAASFQETTRVLTKAAIEGRIDWLRGLKENIIIGHLIPAGTGSQNYRNCFKKESLVRSKLPKSFDTILTR</sequence>
<name>RPOC2_PHATC</name>
<gene>
    <name evidence="1" type="primary">rpoC2</name>
</gene>
<evidence type="ECO:0000255" key="1">
    <source>
        <dbReference type="HAMAP-Rule" id="MF_01324"/>
    </source>
</evidence>
<protein>
    <recommendedName>
        <fullName evidence="1">DNA-directed RNA polymerase subunit beta''</fullName>
        <ecNumber evidence="1">2.7.7.6</ecNumber>
    </recommendedName>
    <alternativeName>
        <fullName evidence="1">PEP</fullName>
    </alternativeName>
    <alternativeName>
        <fullName evidence="1">Plastid-encoded RNA polymerase subunit beta''</fullName>
        <shortName evidence="1">RNA polymerase subunit beta''</shortName>
    </alternativeName>
</protein>
<reference key="1">
    <citation type="journal article" date="2007" name="Mol. Genet. Genomics">
        <title>Chloroplast genomes of the diatoms Phaeodactylum tricornutum and Thalassiosira pseudonana: comparison with other plastid genomes of the red lineage.</title>
        <authorList>
            <person name="Oudot-Le Secq M.-P."/>
            <person name="Grimwood J."/>
            <person name="Shapiro H."/>
            <person name="Armbrust E.V."/>
            <person name="Bowler C."/>
            <person name="Green B.R."/>
        </authorList>
    </citation>
    <scope>NUCLEOTIDE SEQUENCE [LARGE SCALE GENOMIC DNA]</scope>
    <source>
        <strain>CCAP 1055/1</strain>
    </source>
</reference>
<dbReference type="EC" id="2.7.7.6" evidence="1"/>
<dbReference type="EMBL" id="EF067920">
    <property type="protein sequence ID" value="ABK20637.1"/>
    <property type="molecule type" value="Genomic_DNA"/>
</dbReference>
<dbReference type="RefSeq" id="YP_874414.1">
    <property type="nucleotide sequence ID" value="NC_008588.1"/>
</dbReference>
<dbReference type="SMR" id="A0T0D9"/>
<dbReference type="STRING" id="556484.A0T0D9"/>
<dbReference type="GeneID" id="4524589"/>
<dbReference type="InParanoid" id="A0T0D9"/>
<dbReference type="Proteomes" id="UP000000759">
    <property type="component" value="Chloroplast"/>
</dbReference>
<dbReference type="GO" id="GO:0009507">
    <property type="term" value="C:chloroplast"/>
    <property type="evidence" value="ECO:0007669"/>
    <property type="project" value="UniProtKB-SubCell"/>
</dbReference>
<dbReference type="GO" id="GO:0000428">
    <property type="term" value="C:DNA-directed RNA polymerase complex"/>
    <property type="evidence" value="ECO:0007669"/>
    <property type="project" value="UniProtKB-KW"/>
</dbReference>
<dbReference type="GO" id="GO:0005739">
    <property type="term" value="C:mitochondrion"/>
    <property type="evidence" value="ECO:0007669"/>
    <property type="project" value="GOC"/>
</dbReference>
<dbReference type="GO" id="GO:0003677">
    <property type="term" value="F:DNA binding"/>
    <property type="evidence" value="ECO:0007669"/>
    <property type="project" value="UniProtKB-UniRule"/>
</dbReference>
<dbReference type="GO" id="GO:0003899">
    <property type="term" value="F:DNA-directed RNA polymerase activity"/>
    <property type="evidence" value="ECO:0007669"/>
    <property type="project" value="UniProtKB-UniRule"/>
</dbReference>
<dbReference type="GO" id="GO:0008270">
    <property type="term" value="F:zinc ion binding"/>
    <property type="evidence" value="ECO:0007669"/>
    <property type="project" value="UniProtKB-UniRule"/>
</dbReference>
<dbReference type="GO" id="GO:0006351">
    <property type="term" value="P:DNA-templated transcription"/>
    <property type="evidence" value="ECO:0007669"/>
    <property type="project" value="UniProtKB-UniRule"/>
</dbReference>
<dbReference type="CDD" id="cd02655">
    <property type="entry name" value="RNAP_beta'_C"/>
    <property type="match status" value="1"/>
</dbReference>
<dbReference type="Gene3D" id="1.10.132.30">
    <property type="match status" value="1"/>
</dbReference>
<dbReference type="Gene3D" id="1.10.150.390">
    <property type="match status" value="1"/>
</dbReference>
<dbReference type="Gene3D" id="1.10.1790.20">
    <property type="match status" value="1"/>
</dbReference>
<dbReference type="Gene3D" id="1.10.274.100">
    <property type="entry name" value="RNA polymerase Rpb1, domain 3"/>
    <property type="match status" value="1"/>
</dbReference>
<dbReference type="HAMAP" id="MF_01324">
    <property type="entry name" value="RNApol_bact_RpoC2"/>
    <property type="match status" value="1"/>
</dbReference>
<dbReference type="InterPro" id="IPR012756">
    <property type="entry name" value="DNA-dir_RpoC2_beta_pp"/>
</dbReference>
<dbReference type="InterPro" id="IPR045867">
    <property type="entry name" value="DNA-dir_RpoC_beta_prime"/>
</dbReference>
<dbReference type="InterPro" id="IPR007066">
    <property type="entry name" value="RNA_pol_Rpb1_3"/>
</dbReference>
<dbReference type="InterPro" id="IPR042102">
    <property type="entry name" value="RNA_pol_Rpb1_3_sf"/>
</dbReference>
<dbReference type="InterPro" id="IPR007083">
    <property type="entry name" value="RNA_pol_Rpb1_4"/>
</dbReference>
<dbReference type="InterPro" id="IPR007081">
    <property type="entry name" value="RNA_pol_Rpb1_5"/>
</dbReference>
<dbReference type="InterPro" id="IPR038120">
    <property type="entry name" value="Rpb1_funnel_sf"/>
</dbReference>
<dbReference type="NCBIfam" id="TIGR02388">
    <property type="entry name" value="rpoC2_cyan"/>
    <property type="match status" value="1"/>
</dbReference>
<dbReference type="PANTHER" id="PTHR19376">
    <property type="entry name" value="DNA-DIRECTED RNA POLYMERASE"/>
    <property type="match status" value="1"/>
</dbReference>
<dbReference type="PANTHER" id="PTHR19376:SF63">
    <property type="entry name" value="DNA-DIRECTED RNA POLYMERASE SUBUNIT BETA"/>
    <property type="match status" value="1"/>
</dbReference>
<dbReference type="Pfam" id="PF04983">
    <property type="entry name" value="RNA_pol_Rpb1_3"/>
    <property type="match status" value="1"/>
</dbReference>
<dbReference type="Pfam" id="PF05000">
    <property type="entry name" value="RNA_pol_Rpb1_4"/>
    <property type="match status" value="1"/>
</dbReference>
<dbReference type="Pfam" id="PF04998">
    <property type="entry name" value="RNA_pol_Rpb1_5"/>
    <property type="match status" value="1"/>
</dbReference>
<dbReference type="SUPFAM" id="SSF64484">
    <property type="entry name" value="beta and beta-prime subunits of DNA dependent RNA-polymerase"/>
    <property type="match status" value="1"/>
</dbReference>
<geneLocation type="chloroplast"/>
<comment type="function">
    <text evidence="1">DNA-dependent RNA polymerase catalyzes the transcription of DNA into RNA using the four ribonucleoside triphosphates as substrates.</text>
</comment>
<comment type="catalytic activity">
    <reaction evidence="1">
        <text>RNA(n) + a ribonucleoside 5'-triphosphate = RNA(n+1) + diphosphate</text>
        <dbReference type="Rhea" id="RHEA:21248"/>
        <dbReference type="Rhea" id="RHEA-COMP:14527"/>
        <dbReference type="Rhea" id="RHEA-COMP:17342"/>
        <dbReference type="ChEBI" id="CHEBI:33019"/>
        <dbReference type="ChEBI" id="CHEBI:61557"/>
        <dbReference type="ChEBI" id="CHEBI:140395"/>
        <dbReference type="EC" id="2.7.7.6"/>
    </reaction>
</comment>
<comment type="cofactor">
    <cofactor evidence="1">
        <name>Zn(2+)</name>
        <dbReference type="ChEBI" id="CHEBI:29105"/>
    </cofactor>
    <text evidence="1">Binds 1 Zn(2+) ion per subunit.</text>
</comment>
<comment type="subunit">
    <text evidence="1">In plastids the minimal PEP RNA polymerase catalytic core is composed of four subunits: alpha, beta, beta', and beta''. When a (nuclear-encoded) sigma factor is associated with the core the holoenzyme is formed, which can initiate transcription.</text>
</comment>
<comment type="subcellular location">
    <subcellularLocation>
        <location evidence="1">Plastid</location>
        <location evidence="1">Chloroplast</location>
    </subcellularLocation>
</comment>
<comment type="similarity">
    <text evidence="1">Belongs to the RNA polymerase beta' chain family. RpoC2 subfamily.</text>
</comment>
<keyword id="KW-0150">Chloroplast</keyword>
<keyword id="KW-0240">DNA-directed RNA polymerase</keyword>
<keyword id="KW-0479">Metal-binding</keyword>
<keyword id="KW-0548">Nucleotidyltransferase</keyword>
<keyword id="KW-0934">Plastid</keyword>
<keyword id="KW-1185">Reference proteome</keyword>
<keyword id="KW-0804">Transcription</keyword>
<keyword id="KW-0808">Transferase</keyword>
<keyword id="KW-0862">Zinc</keyword>